<name>DNAA_AZOVD</name>
<feature type="chain" id="PRO_1000205647" description="Chromosomal replication initiator protein DnaA">
    <location>
        <begin position="1"/>
        <end position="478"/>
    </location>
</feature>
<feature type="region of interest" description="Domain I, interacts with DnaA modulators" evidence="1">
    <location>
        <begin position="1"/>
        <end position="90"/>
    </location>
</feature>
<feature type="region of interest" description="Domain II" evidence="1">
    <location>
        <begin position="91"/>
        <end position="141"/>
    </location>
</feature>
<feature type="region of interest" description="Domain III, AAA+ region" evidence="1">
    <location>
        <begin position="142"/>
        <end position="358"/>
    </location>
</feature>
<feature type="region of interest" description="Domain IV, binds dsDNA" evidence="1">
    <location>
        <begin position="359"/>
        <end position="478"/>
    </location>
</feature>
<feature type="binding site" evidence="1">
    <location>
        <position position="186"/>
    </location>
    <ligand>
        <name>ATP</name>
        <dbReference type="ChEBI" id="CHEBI:30616"/>
    </ligand>
</feature>
<feature type="binding site" evidence="1">
    <location>
        <position position="188"/>
    </location>
    <ligand>
        <name>ATP</name>
        <dbReference type="ChEBI" id="CHEBI:30616"/>
    </ligand>
</feature>
<feature type="binding site" evidence="1">
    <location>
        <position position="189"/>
    </location>
    <ligand>
        <name>ATP</name>
        <dbReference type="ChEBI" id="CHEBI:30616"/>
    </ligand>
</feature>
<feature type="binding site" evidence="1">
    <location>
        <position position="190"/>
    </location>
    <ligand>
        <name>ATP</name>
        <dbReference type="ChEBI" id="CHEBI:30616"/>
    </ligand>
</feature>
<evidence type="ECO:0000255" key="1">
    <source>
        <dbReference type="HAMAP-Rule" id="MF_00377"/>
    </source>
</evidence>
<gene>
    <name evidence="1" type="primary">dnaA</name>
    <name type="ordered locus">Avin_00010</name>
</gene>
<protein>
    <recommendedName>
        <fullName evidence="1">Chromosomal replication initiator protein DnaA</fullName>
    </recommendedName>
</protein>
<sequence>MSVELWQQCVELLRDELPAQQFNTWIRPLQVEADGDELRVYAPNRFVLDWVNEKYLGRLLELLGERSEDVTPSVSLLIGSKRSSAPRAVQPASPPPAVVQAAPVAIEEASAARTVDAQPVAPATVRTERSVQVEGGLKHTSYLNRAFTFENFVEGKSNQLARAAAWQVADNPKHGYNPLFLYGGVGLGKTHLMHAVGNHLLKKNPNAKVVYLHSERFVADMVKALQLNAINEFKRFYRSVDALLIDDIQFFAKKERSQEEFFHTFNALLEGGQQVILTSDRYPKEIEGLEERLKSRFGWGLTVAVEPPELETRVAILMKKAEQTKVELPHDAAFFIAQRIRSNVRELEGALKRVIAHSHFTNHPITIELIRESLKDLLALQDKLVSIDNIQRTVAEYYKIKIADLLSKRRSRSVARPRQVAMALSKELTNHSLPEIGDSFGGRDHTTVLHACRKIAELRETDADIREDYKNLLRTLTT</sequence>
<accession>C1DFU2</accession>
<dbReference type="EMBL" id="CP001157">
    <property type="protein sequence ID" value="ACO76269.1"/>
    <property type="molecule type" value="Genomic_DNA"/>
</dbReference>
<dbReference type="RefSeq" id="WP_012698697.1">
    <property type="nucleotide sequence ID" value="NC_012560.1"/>
</dbReference>
<dbReference type="SMR" id="C1DFU2"/>
<dbReference type="STRING" id="322710.Avin_00010"/>
<dbReference type="EnsemblBacteria" id="ACO76269">
    <property type="protein sequence ID" value="ACO76269"/>
    <property type="gene ID" value="Avin_00010"/>
</dbReference>
<dbReference type="GeneID" id="88183479"/>
<dbReference type="KEGG" id="avn:Avin_00010"/>
<dbReference type="eggNOG" id="COG0593">
    <property type="taxonomic scope" value="Bacteria"/>
</dbReference>
<dbReference type="HOGENOM" id="CLU_026910_0_1_6"/>
<dbReference type="OrthoDB" id="9807019at2"/>
<dbReference type="Proteomes" id="UP000002424">
    <property type="component" value="Chromosome"/>
</dbReference>
<dbReference type="GO" id="GO:0005737">
    <property type="term" value="C:cytoplasm"/>
    <property type="evidence" value="ECO:0007669"/>
    <property type="project" value="UniProtKB-SubCell"/>
</dbReference>
<dbReference type="GO" id="GO:0005886">
    <property type="term" value="C:plasma membrane"/>
    <property type="evidence" value="ECO:0007669"/>
    <property type="project" value="TreeGrafter"/>
</dbReference>
<dbReference type="GO" id="GO:0005524">
    <property type="term" value="F:ATP binding"/>
    <property type="evidence" value="ECO:0007669"/>
    <property type="project" value="UniProtKB-UniRule"/>
</dbReference>
<dbReference type="GO" id="GO:0016887">
    <property type="term" value="F:ATP hydrolysis activity"/>
    <property type="evidence" value="ECO:0007669"/>
    <property type="project" value="InterPro"/>
</dbReference>
<dbReference type="GO" id="GO:0003688">
    <property type="term" value="F:DNA replication origin binding"/>
    <property type="evidence" value="ECO:0007669"/>
    <property type="project" value="UniProtKB-UniRule"/>
</dbReference>
<dbReference type="GO" id="GO:0008289">
    <property type="term" value="F:lipid binding"/>
    <property type="evidence" value="ECO:0007669"/>
    <property type="project" value="UniProtKB-KW"/>
</dbReference>
<dbReference type="GO" id="GO:0006270">
    <property type="term" value="P:DNA replication initiation"/>
    <property type="evidence" value="ECO:0007669"/>
    <property type="project" value="UniProtKB-UniRule"/>
</dbReference>
<dbReference type="GO" id="GO:0006275">
    <property type="term" value="P:regulation of DNA replication"/>
    <property type="evidence" value="ECO:0007669"/>
    <property type="project" value="UniProtKB-UniRule"/>
</dbReference>
<dbReference type="CDD" id="cd00009">
    <property type="entry name" value="AAA"/>
    <property type="match status" value="1"/>
</dbReference>
<dbReference type="CDD" id="cd06571">
    <property type="entry name" value="Bac_DnaA_C"/>
    <property type="match status" value="1"/>
</dbReference>
<dbReference type="FunFam" id="1.10.1750.10:FF:000001">
    <property type="entry name" value="Chromosomal replication initiator protein DnaA"/>
    <property type="match status" value="1"/>
</dbReference>
<dbReference type="FunFam" id="1.10.8.60:FF:000003">
    <property type="entry name" value="Chromosomal replication initiator protein DnaA"/>
    <property type="match status" value="1"/>
</dbReference>
<dbReference type="FunFam" id="3.40.50.300:FF:000103">
    <property type="entry name" value="Chromosomal replication initiator protein DnaA"/>
    <property type="match status" value="1"/>
</dbReference>
<dbReference type="Gene3D" id="1.10.1750.10">
    <property type="match status" value="1"/>
</dbReference>
<dbReference type="Gene3D" id="1.10.8.60">
    <property type="match status" value="1"/>
</dbReference>
<dbReference type="Gene3D" id="3.30.300.180">
    <property type="match status" value="1"/>
</dbReference>
<dbReference type="Gene3D" id="3.40.50.300">
    <property type="entry name" value="P-loop containing nucleotide triphosphate hydrolases"/>
    <property type="match status" value="1"/>
</dbReference>
<dbReference type="HAMAP" id="MF_00377">
    <property type="entry name" value="DnaA_bact"/>
    <property type="match status" value="1"/>
</dbReference>
<dbReference type="InterPro" id="IPR003593">
    <property type="entry name" value="AAA+_ATPase"/>
</dbReference>
<dbReference type="InterPro" id="IPR001957">
    <property type="entry name" value="Chromosome_initiator_DnaA"/>
</dbReference>
<dbReference type="InterPro" id="IPR020591">
    <property type="entry name" value="Chromosome_initiator_DnaA-like"/>
</dbReference>
<dbReference type="InterPro" id="IPR018312">
    <property type="entry name" value="Chromosome_initiator_DnaA_CS"/>
</dbReference>
<dbReference type="InterPro" id="IPR013159">
    <property type="entry name" value="DnaA_C"/>
</dbReference>
<dbReference type="InterPro" id="IPR013317">
    <property type="entry name" value="DnaA_dom"/>
</dbReference>
<dbReference type="InterPro" id="IPR024633">
    <property type="entry name" value="DnaA_N_dom"/>
</dbReference>
<dbReference type="InterPro" id="IPR038454">
    <property type="entry name" value="DnaA_N_sf"/>
</dbReference>
<dbReference type="InterPro" id="IPR027417">
    <property type="entry name" value="P-loop_NTPase"/>
</dbReference>
<dbReference type="InterPro" id="IPR010921">
    <property type="entry name" value="Trp_repressor/repl_initiator"/>
</dbReference>
<dbReference type="NCBIfam" id="TIGR00362">
    <property type="entry name" value="DnaA"/>
    <property type="match status" value="1"/>
</dbReference>
<dbReference type="PANTHER" id="PTHR30050">
    <property type="entry name" value="CHROMOSOMAL REPLICATION INITIATOR PROTEIN DNAA"/>
    <property type="match status" value="1"/>
</dbReference>
<dbReference type="PANTHER" id="PTHR30050:SF2">
    <property type="entry name" value="CHROMOSOMAL REPLICATION INITIATOR PROTEIN DNAA"/>
    <property type="match status" value="1"/>
</dbReference>
<dbReference type="Pfam" id="PF00308">
    <property type="entry name" value="Bac_DnaA"/>
    <property type="match status" value="1"/>
</dbReference>
<dbReference type="Pfam" id="PF08299">
    <property type="entry name" value="Bac_DnaA_C"/>
    <property type="match status" value="1"/>
</dbReference>
<dbReference type="Pfam" id="PF11638">
    <property type="entry name" value="DnaA_N"/>
    <property type="match status" value="1"/>
</dbReference>
<dbReference type="PRINTS" id="PR00051">
    <property type="entry name" value="DNAA"/>
</dbReference>
<dbReference type="SMART" id="SM00382">
    <property type="entry name" value="AAA"/>
    <property type="match status" value="1"/>
</dbReference>
<dbReference type="SMART" id="SM00760">
    <property type="entry name" value="Bac_DnaA_C"/>
    <property type="match status" value="1"/>
</dbReference>
<dbReference type="SUPFAM" id="SSF52540">
    <property type="entry name" value="P-loop containing nucleoside triphosphate hydrolases"/>
    <property type="match status" value="1"/>
</dbReference>
<dbReference type="SUPFAM" id="SSF48295">
    <property type="entry name" value="TrpR-like"/>
    <property type="match status" value="1"/>
</dbReference>
<dbReference type="PROSITE" id="PS01008">
    <property type="entry name" value="DNAA"/>
    <property type="match status" value="1"/>
</dbReference>
<proteinExistence type="inferred from homology"/>
<reference key="1">
    <citation type="journal article" date="2009" name="J. Bacteriol.">
        <title>Genome sequence of Azotobacter vinelandii, an obligate aerobe specialized to support diverse anaerobic metabolic processes.</title>
        <authorList>
            <person name="Setubal J.C."/>
            <person name="Dos Santos P."/>
            <person name="Goldman B.S."/>
            <person name="Ertesvaag H."/>
            <person name="Espin G."/>
            <person name="Rubio L.M."/>
            <person name="Valla S."/>
            <person name="Almeida N.F."/>
            <person name="Balasubramanian D."/>
            <person name="Cromes L."/>
            <person name="Curatti L."/>
            <person name="Du Z."/>
            <person name="Godsy E."/>
            <person name="Goodner B."/>
            <person name="Hellner-Burris K."/>
            <person name="Hernandez J.A."/>
            <person name="Houmiel K."/>
            <person name="Imperial J."/>
            <person name="Kennedy C."/>
            <person name="Larson T.J."/>
            <person name="Latreille P."/>
            <person name="Ligon L.S."/>
            <person name="Lu J."/>
            <person name="Maerk M."/>
            <person name="Miller N.M."/>
            <person name="Norton S."/>
            <person name="O'Carroll I.P."/>
            <person name="Paulsen I."/>
            <person name="Raulfs E.C."/>
            <person name="Roemer R."/>
            <person name="Rosser J."/>
            <person name="Segura D."/>
            <person name="Slater S."/>
            <person name="Stricklin S.L."/>
            <person name="Studholme D.J."/>
            <person name="Sun J."/>
            <person name="Viana C.J."/>
            <person name="Wallin E."/>
            <person name="Wang B."/>
            <person name="Wheeler C."/>
            <person name="Zhu H."/>
            <person name="Dean D.R."/>
            <person name="Dixon R."/>
            <person name="Wood D."/>
        </authorList>
    </citation>
    <scope>NUCLEOTIDE SEQUENCE [LARGE SCALE GENOMIC DNA]</scope>
    <source>
        <strain>DJ / ATCC BAA-1303</strain>
    </source>
</reference>
<keyword id="KW-0067">ATP-binding</keyword>
<keyword id="KW-0963">Cytoplasm</keyword>
<keyword id="KW-0235">DNA replication</keyword>
<keyword id="KW-0238">DNA-binding</keyword>
<keyword id="KW-0446">Lipid-binding</keyword>
<keyword id="KW-0547">Nucleotide-binding</keyword>
<comment type="function">
    <text evidence="1">Plays an essential role in the initiation and regulation of chromosomal replication. ATP-DnaA binds to the origin of replication (oriC) to initiate formation of the DNA replication initiation complex once per cell cycle. Binds the DnaA box (a 9 base pair repeat at the origin) and separates the double-stranded (ds)DNA. Forms a right-handed helical filament on oriC DNA; dsDNA binds to the exterior of the filament while single-stranded (ss)DNA is stabiized in the filament's interior. The ATP-DnaA-oriC complex binds and stabilizes one strand of the AT-rich DNA unwinding element (DUE), permitting loading of DNA polymerase. After initiation quickly degrades to an ADP-DnaA complex that is not apt for DNA replication. Binds acidic phospholipids.</text>
</comment>
<comment type="subunit">
    <text evidence="1">Oligomerizes as a right-handed, spiral filament on DNA at oriC.</text>
</comment>
<comment type="subcellular location">
    <subcellularLocation>
        <location evidence="1">Cytoplasm</location>
    </subcellularLocation>
</comment>
<comment type="domain">
    <text evidence="1">Domain I is involved in oligomerization and binding regulators, domain II is flexibile and of varying length in different bacteria, domain III forms the AAA+ region, while domain IV binds dsDNA.</text>
</comment>
<comment type="similarity">
    <text evidence="1">Belongs to the DnaA family.</text>
</comment>
<organism>
    <name type="scientific">Azotobacter vinelandii (strain DJ / ATCC BAA-1303)</name>
    <dbReference type="NCBI Taxonomy" id="322710"/>
    <lineage>
        <taxon>Bacteria</taxon>
        <taxon>Pseudomonadati</taxon>
        <taxon>Pseudomonadota</taxon>
        <taxon>Gammaproteobacteria</taxon>
        <taxon>Pseudomonadales</taxon>
        <taxon>Pseudomonadaceae</taxon>
        <taxon>Azotobacter</taxon>
    </lineage>
</organism>